<accession>Q8PML1</accession>
<comment type="function">
    <text evidence="1">Catalyzes the NADPH-dependent rearrangement and reduction of 1-deoxy-D-xylulose-5-phosphate (DXP) to 2-C-methyl-D-erythritol 4-phosphate (MEP).</text>
</comment>
<comment type="catalytic activity">
    <reaction evidence="1">
        <text>2-C-methyl-D-erythritol 4-phosphate + NADP(+) = 1-deoxy-D-xylulose 5-phosphate + NADPH + H(+)</text>
        <dbReference type="Rhea" id="RHEA:13717"/>
        <dbReference type="ChEBI" id="CHEBI:15378"/>
        <dbReference type="ChEBI" id="CHEBI:57783"/>
        <dbReference type="ChEBI" id="CHEBI:57792"/>
        <dbReference type="ChEBI" id="CHEBI:58262"/>
        <dbReference type="ChEBI" id="CHEBI:58349"/>
        <dbReference type="EC" id="1.1.1.267"/>
    </reaction>
    <physiologicalReaction direction="right-to-left" evidence="1">
        <dbReference type="Rhea" id="RHEA:13719"/>
    </physiologicalReaction>
</comment>
<comment type="cofactor">
    <cofactor evidence="1">
        <name>Mg(2+)</name>
        <dbReference type="ChEBI" id="CHEBI:18420"/>
    </cofactor>
    <cofactor evidence="1">
        <name>Mn(2+)</name>
        <dbReference type="ChEBI" id="CHEBI:29035"/>
    </cofactor>
</comment>
<comment type="pathway">
    <text evidence="1">Isoprenoid biosynthesis; isopentenyl diphosphate biosynthesis via DXP pathway; isopentenyl diphosphate from 1-deoxy-D-xylulose 5-phosphate: step 1/6.</text>
</comment>
<comment type="similarity">
    <text evidence="1">Belongs to the DXR family.</text>
</comment>
<dbReference type="EC" id="1.1.1.267" evidence="1"/>
<dbReference type="EMBL" id="AE008923">
    <property type="protein sequence ID" value="AAM36286.1"/>
    <property type="molecule type" value="Genomic_DNA"/>
</dbReference>
<dbReference type="RefSeq" id="WP_005911720.1">
    <property type="nucleotide sequence ID" value="NC_003919.1"/>
</dbReference>
<dbReference type="SMR" id="Q8PML1"/>
<dbReference type="KEGG" id="xac:XAC1415"/>
<dbReference type="eggNOG" id="COG0743">
    <property type="taxonomic scope" value="Bacteria"/>
</dbReference>
<dbReference type="HOGENOM" id="CLU_035714_4_0_6"/>
<dbReference type="UniPathway" id="UPA00056">
    <property type="reaction ID" value="UER00092"/>
</dbReference>
<dbReference type="Proteomes" id="UP000000576">
    <property type="component" value="Chromosome"/>
</dbReference>
<dbReference type="GO" id="GO:0030604">
    <property type="term" value="F:1-deoxy-D-xylulose-5-phosphate reductoisomerase activity"/>
    <property type="evidence" value="ECO:0007669"/>
    <property type="project" value="UniProtKB-UniRule"/>
</dbReference>
<dbReference type="GO" id="GO:0030145">
    <property type="term" value="F:manganese ion binding"/>
    <property type="evidence" value="ECO:0007669"/>
    <property type="project" value="TreeGrafter"/>
</dbReference>
<dbReference type="GO" id="GO:0070402">
    <property type="term" value="F:NADPH binding"/>
    <property type="evidence" value="ECO:0007669"/>
    <property type="project" value="InterPro"/>
</dbReference>
<dbReference type="GO" id="GO:0051484">
    <property type="term" value="P:isopentenyl diphosphate biosynthetic process, methylerythritol 4-phosphate pathway involved in terpenoid biosynthetic process"/>
    <property type="evidence" value="ECO:0007669"/>
    <property type="project" value="TreeGrafter"/>
</dbReference>
<dbReference type="FunFam" id="3.40.50.720:FF:000045">
    <property type="entry name" value="1-deoxy-D-xylulose 5-phosphate reductoisomerase"/>
    <property type="match status" value="1"/>
</dbReference>
<dbReference type="Gene3D" id="1.10.1740.10">
    <property type="match status" value="1"/>
</dbReference>
<dbReference type="Gene3D" id="3.40.50.720">
    <property type="entry name" value="NAD(P)-binding Rossmann-like Domain"/>
    <property type="match status" value="1"/>
</dbReference>
<dbReference type="HAMAP" id="MF_00183">
    <property type="entry name" value="DXP_reductoisom"/>
    <property type="match status" value="1"/>
</dbReference>
<dbReference type="InterPro" id="IPR003821">
    <property type="entry name" value="DXP_reductoisomerase"/>
</dbReference>
<dbReference type="InterPro" id="IPR013644">
    <property type="entry name" value="DXP_reductoisomerase_C"/>
</dbReference>
<dbReference type="InterPro" id="IPR013512">
    <property type="entry name" value="DXP_reductoisomerase_N"/>
</dbReference>
<dbReference type="InterPro" id="IPR026877">
    <property type="entry name" value="DXPR_C"/>
</dbReference>
<dbReference type="InterPro" id="IPR036169">
    <property type="entry name" value="DXPR_C_sf"/>
</dbReference>
<dbReference type="InterPro" id="IPR036291">
    <property type="entry name" value="NAD(P)-bd_dom_sf"/>
</dbReference>
<dbReference type="NCBIfam" id="TIGR00243">
    <property type="entry name" value="Dxr"/>
    <property type="match status" value="1"/>
</dbReference>
<dbReference type="NCBIfam" id="NF009114">
    <property type="entry name" value="PRK12464.1"/>
    <property type="match status" value="1"/>
</dbReference>
<dbReference type="PANTHER" id="PTHR30525">
    <property type="entry name" value="1-DEOXY-D-XYLULOSE 5-PHOSPHATE REDUCTOISOMERASE"/>
    <property type="match status" value="1"/>
</dbReference>
<dbReference type="PANTHER" id="PTHR30525:SF0">
    <property type="entry name" value="1-DEOXY-D-XYLULOSE 5-PHOSPHATE REDUCTOISOMERASE, CHLOROPLASTIC"/>
    <property type="match status" value="1"/>
</dbReference>
<dbReference type="Pfam" id="PF08436">
    <property type="entry name" value="DXP_redisom_C"/>
    <property type="match status" value="1"/>
</dbReference>
<dbReference type="Pfam" id="PF02670">
    <property type="entry name" value="DXP_reductoisom"/>
    <property type="match status" value="1"/>
</dbReference>
<dbReference type="Pfam" id="PF13288">
    <property type="entry name" value="DXPR_C"/>
    <property type="match status" value="1"/>
</dbReference>
<dbReference type="PIRSF" id="PIRSF006205">
    <property type="entry name" value="Dxp_reductismrs"/>
    <property type="match status" value="1"/>
</dbReference>
<dbReference type="SUPFAM" id="SSF69055">
    <property type="entry name" value="1-deoxy-D-xylulose-5-phosphate reductoisomerase, C-terminal domain"/>
    <property type="match status" value="1"/>
</dbReference>
<dbReference type="SUPFAM" id="SSF55347">
    <property type="entry name" value="Glyceraldehyde-3-phosphate dehydrogenase-like, C-terminal domain"/>
    <property type="match status" value="1"/>
</dbReference>
<dbReference type="SUPFAM" id="SSF51735">
    <property type="entry name" value="NAD(P)-binding Rossmann-fold domains"/>
    <property type="match status" value="1"/>
</dbReference>
<feature type="chain" id="PRO_0000163739" description="1-deoxy-D-xylulose 5-phosphate reductoisomerase">
    <location>
        <begin position="1"/>
        <end position="396"/>
    </location>
</feature>
<feature type="binding site" evidence="1">
    <location>
        <position position="15"/>
    </location>
    <ligand>
        <name>NADPH</name>
        <dbReference type="ChEBI" id="CHEBI:57783"/>
    </ligand>
</feature>
<feature type="binding site" evidence="1">
    <location>
        <position position="16"/>
    </location>
    <ligand>
        <name>NADPH</name>
        <dbReference type="ChEBI" id="CHEBI:57783"/>
    </ligand>
</feature>
<feature type="binding site" evidence="1">
    <location>
        <position position="17"/>
    </location>
    <ligand>
        <name>NADPH</name>
        <dbReference type="ChEBI" id="CHEBI:57783"/>
    </ligand>
</feature>
<feature type="binding site" evidence="1">
    <location>
        <position position="18"/>
    </location>
    <ligand>
        <name>NADPH</name>
        <dbReference type="ChEBI" id="CHEBI:57783"/>
    </ligand>
</feature>
<feature type="binding site" evidence="1">
    <location>
        <position position="41"/>
    </location>
    <ligand>
        <name>NADPH</name>
        <dbReference type="ChEBI" id="CHEBI:57783"/>
    </ligand>
</feature>
<feature type="binding site" evidence="1">
    <location>
        <position position="129"/>
    </location>
    <ligand>
        <name>NADPH</name>
        <dbReference type="ChEBI" id="CHEBI:57783"/>
    </ligand>
</feature>
<feature type="binding site" evidence="1">
    <location>
        <position position="130"/>
    </location>
    <ligand>
        <name>1-deoxy-D-xylulose 5-phosphate</name>
        <dbReference type="ChEBI" id="CHEBI:57792"/>
    </ligand>
</feature>
<feature type="binding site" evidence="1">
    <location>
        <position position="131"/>
    </location>
    <ligand>
        <name>NADPH</name>
        <dbReference type="ChEBI" id="CHEBI:57783"/>
    </ligand>
</feature>
<feature type="binding site" evidence="1">
    <location>
        <position position="155"/>
    </location>
    <ligand>
        <name>Mn(2+)</name>
        <dbReference type="ChEBI" id="CHEBI:29035"/>
    </ligand>
</feature>
<feature type="binding site" evidence="1">
    <location>
        <position position="156"/>
    </location>
    <ligand>
        <name>1-deoxy-D-xylulose 5-phosphate</name>
        <dbReference type="ChEBI" id="CHEBI:57792"/>
    </ligand>
</feature>
<feature type="binding site" evidence="1">
    <location>
        <position position="157"/>
    </location>
    <ligand>
        <name>1-deoxy-D-xylulose 5-phosphate</name>
        <dbReference type="ChEBI" id="CHEBI:57792"/>
    </ligand>
</feature>
<feature type="binding site" evidence="1">
    <location>
        <position position="157"/>
    </location>
    <ligand>
        <name>Mn(2+)</name>
        <dbReference type="ChEBI" id="CHEBI:29035"/>
    </ligand>
</feature>
<feature type="binding site" evidence="1">
    <location>
        <position position="182"/>
    </location>
    <ligand>
        <name>1-deoxy-D-xylulose 5-phosphate</name>
        <dbReference type="ChEBI" id="CHEBI:57792"/>
    </ligand>
</feature>
<feature type="binding site" evidence="1">
    <location>
        <position position="205"/>
    </location>
    <ligand>
        <name>1-deoxy-D-xylulose 5-phosphate</name>
        <dbReference type="ChEBI" id="CHEBI:57792"/>
    </ligand>
</feature>
<feature type="binding site" evidence="1">
    <location>
        <position position="211"/>
    </location>
    <ligand>
        <name>NADPH</name>
        <dbReference type="ChEBI" id="CHEBI:57783"/>
    </ligand>
</feature>
<feature type="binding site" evidence="1">
    <location>
        <position position="218"/>
    </location>
    <ligand>
        <name>1-deoxy-D-xylulose 5-phosphate</name>
        <dbReference type="ChEBI" id="CHEBI:57792"/>
    </ligand>
</feature>
<feature type="binding site" evidence="1">
    <location>
        <position position="223"/>
    </location>
    <ligand>
        <name>1-deoxy-D-xylulose 5-phosphate</name>
        <dbReference type="ChEBI" id="CHEBI:57792"/>
    </ligand>
</feature>
<feature type="binding site" evidence="1">
    <location>
        <position position="224"/>
    </location>
    <ligand>
        <name>1-deoxy-D-xylulose 5-phosphate</name>
        <dbReference type="ChEBI" id="CHEBI:57792"/>
    </ligand>
</feature>
<feature type="binding site" evidence="1">
    <location>
        <position position="227"/>
    </location>
    <ligand>
        <name>1-deoxy-D-xylulose 5-phosphate</name>
        <dbReference type="ChEBI" id="CHEBI:57792"/>
    </ligand>
</feature>
<feature type="binding site" evidence="1">
    <location>
        <position position="227"/>
    </location>
    <ligand>
        <name>Mn(2+)</name>
        <dbReference type="ChEBI" id="CHEBI:29035"/>
    </ligand>
</feature>
<protein>
    <recommendedName>
        <fullName evidence="1">1-deoxy-D-xylulose 5-phosphate reductoisomerase</fullName>
        <shortName evidence="1">DXP reductoisomerase</shortName>
        <ecNumber evidence="1">1.1.1.267</ecNumber>
    </recommendedName>
    <alternativeName>
        <fullName evidence="1">1-deoxyxylulose-5-phosphate reductoisomerase</fullName>
    </alternativeName>
    <alternativeName>
        <fullName evidence="1">2-C-methyl-D-erythritol 4-phosphate synthase</fullName>
    </alternativeName>
</protein>
<gene>
    <name evidence="1" type="primary">dxr</name>
    <name type="ordered locus">XAC1415</name>
</gene>
<evidence type="ECO:0000255" key="1">
    <source>
        <dbReference type="HAMAP-Rule" id="MF_00183"/>
    </source>
</evidence>
<proteinExistence type="inferred from homology"/>
<organism>
    <name type="scientific">Xanthomonas axonopodis pv. citri (strain 306)</name>
    <dbReference type="NCBI Taxonomy" id="190486"/>
    <lineage>
        <taxon>Bacteria</taxon>
        <taxon>Pseudomonadati</taxon>
        <taxon>Pseudomonadota</taxon>
        <taxon>Gammaproteobacteria</taxon>
        <taxon>Lysobacterales</taxon>
        <taxon>Lysobacteraceae</taxon>
        <taxon>Xanthomonas</taxon>
    </lineage>
</organism>
<keyword id="KW-0414">Isoprene biosynthesis</keyword>
<keyword id="KW-0464">Manganese</keyword>
<keyword id="KW-0479">Metal-binding</keyword>
<keyword id="KW-0521">NADP</keyword>
<keyword id="KW-0560">Oxidoreductase</keyword>
<reference key="1">
    <citation type="journal article" date="2002" name="Nature">
        <title>Comparison of the genomes of two Xanthomonas pathogens with differing host specificities.</title>
        <authorList>
            <person name="da Silva A.C.R."/>
            <person name="Ferro J.A."/>
            <person name="Reinach F.C."/>
            <person name="Farah C.S."/>
            <person name="Furlan L.R."/>
            <person name="Quaggio R.B."/>
            <person name="Monteiro-Vitorello C.B."/>
            <person name="Van Sluys M.A."/>
            <person name="Almeida N.F. Jr."/>
            <person name="Alves L.M.C."/>
            <person name="do Amaral A.M."/>
            <person name="Bertolini M.C."/>
            <person name="Camargo L.E.A."/>
            <person name="Camarotte G."/>
            <person name="Cannavan F."/>
            <person name="Cardozo J."/>
            <person name="Chambergo F."/>
            <person name="Ciapina L.P."/>
            <person name="Cicarelli R.M.B."/>
            <person name="Coutinho L.L."/>
            <person name="Cursino-Santos J.R."/>
            <person name="El-Dorry H."/>
            <person name="Faria J.B."/>
            <person name="Ferreira A.J.S."/>
            <person name="Ferreira R.C.C."/>
            <person name="Ferro M.I.T."/>
            <person name="Formighieri E.F."/>
            <person name="Franco M.C."/>
            <person name="Greggio C.C."/>
            <person name="Gruber A."/>
            <person name="Katsuyama A.M."/>
            <person name="Kishi L.T."/>
            <person name="Leite R.P."/>
            <person name="Lemos E.G.M."/>
            <person name="Lemos M.V.F."/>
            <person name="Locali E.C."/>
            <person name="Machado M.A."/>
            <person name="Madeira A.M.B.N."/>
            <person name="Martinez-Rossi N.M."/>
            <person name="Martins E.C."/>
            <person name="Meidanis J."/>
            <person name="Menck C.F.M."/>
            <person name="Miyaki C.Y."/>
            <person name="Moon D.H."/>
            <person name="Moreira L.M."/>
            <person name="Novo M.T.M."/>
            <person name="Okura V.K."/>
            <person name="Oliveira M.C."/>
            <person name="Oliveira V.R."/>
            <person name="Pereira H.A."/>
            <person name="Rossi A."/>
            <person name="Sena J.A.D."/>
            <person name="Silva C."/>
            <person name="de Souza R.F."/>
            <person name="Spinola L.A.F."/>
            <person name="Takita M.A."/>
            <person name="Tamura R.E."/>
            <person name="Teixeira E.C."/>
            <person name="Tezza R.I.D."/>
            <person name="Trindade dos Santos M."/>
            <person name="Truffi D."/>
            <person name="Tsai S.M."/>
            <person name="White F.F."/>
            <person name="Setubal J.C."/>
            <person name="Kitajima J.P."/>
        </authorList>
    </citation>
    <scope>NUCLEOTIDE SEQUENCE [LARGE SCALE GENOMIC DNA]</scope>
    <source>
        <strain>306</strain>
    </source>
</reference>
<name>DXR_XANAC</name>
<sequence>MAGSSPRQVAVFGATGSIGTSALDVIARHPERLRASVLSAGSKVDELLALCATHRPAHALIADATLYPALRDGLRARGLATQAHAGAEALDALASSDACDTVVAAIVGAAGLPSTLAAARAGKRLLLANKESLVLAGELLTRTAAAAGAEIIPIDSEHSAIFQCLRSCDASRGVRRVILTASGGPFRGRDRAALAAVTPAQAVAHPKWSMGPKISVDSATLMNKGLEVIEAHHLFGLPGEQIDVLVHPQSLVHSLVEFVDGSTLAQLGLPDMRTTLAVGLAWPERVESGVGGLDLLSQGRLDFEAPDTAAFPCLRLAWDALRAGGTAPAILNAANEVAVSAFLQGQVGFLAIPALVEHTLTTLQRHNADSLDTLLFADAQARQITERALAHHALHA</sequence>